<feature type="chain" id="PRO_1000088754" description="Aspartate carbamoyltransferase catalytic subunit">
    <location>
        <begin position="1"/>
        <end position="314"/>
    </location>
</feature>
<feature type="binding site" evidence="1">
    <location>
        <position position="55"/>
    </location>
    <ligand>
        <name>carbamoyl phosphate</name>
        <dbReference type="ChEBI" id="CHEBI:58228"/>
    </ligand>
</feature>
<feature type="binding site" evidence="1">
    <location>
        <position position="56"/>
    </location>
    <ligand>
        <name>carbamoyl phosphate</name>
        <dbReference type="ChEBI" id="CHEBI:58228"/>
    </ligand>
</feature>
<feature type="binding site" evidence="1">
    <location>
        <position position="83"/>
    </location>
    <ligand>
        <name>L-aspartate</name>
        <dbReference type="ChEBI" id="CHEBI:29991"/>
    </ligand>
</feature>
<feature type="binding site" evidence="1">
    <location>
        <position position="105"/>
    </location>
    <ligand>
        <name>carbamoyl phosphate</name>
        <dbReference type="ChEBI" id="CHEBI:58228"/>
    </ligand>
</feature>
<feature type="binding site" evidence="1">
    <location>
        <position position="134"/>
    </location>
    <ligand>
        <name>carbamoyl phosphate</name>
        <dbReference type="ChEBI" id="CHEBI:58228"/>
    </ligand>
</feature>
<feature type="binding site" evidence="1">
    <location>
        <position position="137"/>
    </location>
    <ligand>
        <name>carbamoyl phosphate</name>
        <dbReference type="ChEBI" id="CHEBI:58228"/>
    </ligand>
</feature>
<feature type="binding site" evidence="1">
    <location>
        <position position="167"/>
    </location>
    <ligand>
        <name>L-aspartate</name>
        <dbReference type="ChEBI" id="CHEBI:29991"/>
    </ligand>
</feature>
<feature type="binding site" evidence="1">
    <location>
        <position position="221"/>
    </location>
    <ligand>
        <name>L-aspartate</name>
        <dbReference type="ChEBI" id="CHEBI:29991"/>
    </ligand>
</feature>
<feature type="binding site" evidence="1">
    <location>
        <position position="262"/>
    </location>
    <ligand>
        <name>carbamoyl phosphate</name>
        <dbReference type="ChEBI" id="CHEBI:58228"/>
    </ligand>
</feature>
<feature type="binding site" evidence="1">
    <location>
        <position position="263"/>
    </location>
    <ligand>
        <name>carbamoyl phosphate</name>
        <dbReference type="ChEBI" id="CHEBI:58228"/>
    </ligand>
</feature>
<reference key="1">
    <citation type="journal article" date="2008" name="J. Biotechnol.">
        <title>The lifestyle of Corynebacterium urealyticum derived from its complete genome sequence established by pyrosequencing.</title>
        <authorList>
            <person name="Tauch A."/>
            <person name="Trost E."/>
            <person name="Tilker A."/>
            <person name="Ludewig U."/>
            <person name="Schneiker S."/>
            <person name="Goesmann A."/>
            <person name="Arnold W."/>
            <person name="Bekel T."/>
            <person name="Brinkrolf K."/>
            <person name="Brune I."/>
            <person name="Goetker S."/>
            <person name="Kalinowski J."/>
            <person name="Kamp P.-B."/>
            <person name="Lobo F.P."/>
            <person name="Viehoever P."/>
            <person name="Weisshaar B."/>
            <person name="Soriano F."/>
            <person name="Droege M."/>
            <person name="Puehler A."/>
        </authorList>
    </citation>
    <scope>NUCLEOTIDE SEQUENCE [LARGE SCALE GENOMIC DNA]</scope>
    <source>
        <strain>ATCC 43042 / DSM 7109</strain>
    </source>
</reference>
<accession>B1VDM8</accession>
<sequence>MKNLLSISDLTPNEILSIMDEADRFAEALKGREVKKLPTLRGRTVFTMFYENSTRTRASFETAGKWMSADVINISASSSSVKKGESLRDTALTLKSIGADALVMRHPSSGAAQHVANFIGDTAVINAGDGSNQHPTQALLDATTLRRQRGDLSGQHVVIVGDILHSRVARSNAQLLNALGADVTFVAPPTLLPIGVENWGVRVSHDLDAELPSADAVMMLRVQAERMNGGFFPSHREYATRYGLSKARHAMLKPDAVVMHPGPMLRGMEINYSVADAPNTVVLQQVTAGVHVRMAILFQLLIGGHSASETETDA</sequence>
<comment type="function">
    <text evidence="1">Catalyzes the condensation of carbamoyl phosphate and aspartate to form carbamoyl aspartate and inorganic phosphate, the committed step in the de novo pyrimidine nucleotide biosynthesis pathway.</text>
</comment>
<comment type="catalytic activity">
    <reaction evidence="1">
        <text>carbamoyl phosphate + L-aspartate = N-carbamoyl-L-aspartate + phosphate + H(+)</text>
        <dbReference type="Rhea" id="RHEA:20013"/>
        <dbReference type="ChEBI" id="CHEBI:15378"/>
        <dbReference type="ChEBI" id="CHEBI:29991"/>
        <dbReference type="ChEBI" id="CHEBI:32814"/>
        <dbReference type="ChEBI" id="CHEBI:43474"/>
        <dbReference type="ChEBI" id="CHEBI:58228"/>
        <dbReference type="EC" id="2.1.3.2"/>
    </reaction>
</comment>
<comment type="pathway">
    <text evidence="1">Pyrimidine metabolism; UMP biosynthesis via de novo pathway; (S)-dihydroorotate from bicarbonate: step 2/3.</text>
</comment>
<comment type="subunit">
    <text evidence="1">Heterododecamer (2C3:3R2) of six catalytic PyrB chains organized as two trimers (C3), and six regulatory PyrI chains organized as three dimers (R2).</text>
</comment>
<comment type="similarity">
    <text evidence="1">Belongs to the aspartate/ornithine carbamoyltransferase superfamily. ATCase family.</text>
</comment>
<keyword id="KW-0665">Pyrimidine biosynthesis</keyword>
<keyword id="KW-1185">Reference proteome</keyword>
<keyword id="KW-0808">Transferase</keyword>
<dbReference type="EC" id="2.1.3.2" evidence="1"/>
<dbReference type="EMBL" id="AM942444">
    <property type="protein sequence ID" value="CAQ04926.1"/>
    <property type="molecule type" value="Genomic_DNA"/>
</dbReference>
<dbReference type="RefSeq" id="WP_012360214.1">
    <property type="nucleotide sequence ID" value="NC_010545.1"/>
</dbReference>
<dbReference type="SMR" id="B1VDM8"/>
<dbReference type="STRING" id="504474.cu0966"/>
<dbReference type="GeneID" id="60603745"/>
<dbReference type="KEGG" id="cur:cu0966"/>
<dbReference type="eggNOG" id="COG0540">
    <property type="taxonomic scope" value="Bacteria"/>
</dbReference>
<dbReference type="HOGENOM" id="CLU_043846_2_0_11"/>
<dbReference type="UniPathway" id="UPA00070">
    <property type="reaction ID" value="UER00116"/>
</dbReference>
<dbReference type="Proteomes" id="UP000001727">
    <property type="component" value="Chromosome"/>
</dbReference>
<dbReference type="GO" id="GO:0005829">
    <property type="term" value="C:cytosol"/>
    <property type="evidence" value="ECO:0007669"/>
    <property type="project" value="TreeGrafter"/>
</dbReference>
<dbReference type="GO" id="GO:0016597">
    <property type="term" value="F:amino acid binding"/>
    <property type="evidence" value="ECO:0007669"/>
    <property type="project" value="InterPro"/>
</dbReference>
<dbReference type="GO" id="GO:0004070">
    <property type="term" value="F:aspartate carbamoyltransferase activity"/>
    <property type="evidence" value="ECO:0007669"/>
    <property type="project" value="UniProtKB-UniRule"/>
</dbReference>
<dbReference type="GO" id="GO:0006207">
    <property type="term" value="P:'de novo' pyrimidine nucleobase biosynthetic process"/>
    <property type="evidence" value="ECO:0007669"/>
    <property type="project" value="InterPro"/>
</dbReference>
<dbReference type="GO" id="GO:0044205">
    <property type="term" value="P:'de novo' UMP biosynthetic process"/>
    <property type="evidence" value="ECO:0007669"/>
    <property type="project" value="UniProtKB-UniRule"/>
</dbReference>
<dbReference type="GO" id="GO:0006520">
    <property type="term" value="P:amino acid metabolic process"/>
    <property type="evidence" value="ECO:0007669"/>
    <property type="project" value="InterPro"/>
</dbReference>
<dbReference type="FunFam" id="3.40.50.1370:FF:000007">
    <property type="entry name" value="Aspartate carbamoyltransferase"/>
    <property type="match status" value="1"/>
</dbReference>
<dbReference type="Gene3D" id="3.40.50.1370">
    <property type="entry name" value="Aspartate/ornithine carbamoyltransferase"/>
    <property type="match status" value="2"/>
</dbReference>
<dbReference type="HAMAP" id="MF_00001">
    <property type="entry name" value="Asp_carb_tr"/>
    <property type="match status" value="1"/>
</dbReference>
<dbReference type="InterPro" id="IPR006132">
    <property type="entry name" value="Asp/Orn_carbamoyltranf_P-bd"/>
</dbReference>
<dbReference type="InterPro" id="IPR006130">
    <property type="entry name" value="Asp/Orn_carbamoylTrfase"/>
</dbReference>
<dbReference type="InterPro" id="IPR036901">
    <property type="entry name" value="Asp/Orn_carbamoylTrfase_sf"/>
</dbReference>
<dbReference type="InterPro" id="IPR002082">
    <property type="entry name" value="Asp_carbamoyltransf"/>
</dbReference>
<dbReference type="InterPro" id="IPR006131">
    <property type="entry name" value="Asp_carbamoyltransf_Asp/Orn-bd"/>
</dbReference>
<dbReference type="NCBIfam" id="TIGR00670">
    <property type="entry name" value="asp_carb_tr"/>
    <property type="match status" value="1"/>
</dbReference>
<dbReference type="NCBIfam" id="NF002032">
    <property type="entry name" value="PRK00856.1"/>
    <property type="match status" value="1"/>
</dbReference>
<dbReference type="PANTHER" id="PTHR45753:SF6">
    <property type="entry name" value="ASPARTATE CARBAMOYLTRANSFERASE"/>
    <property type="match status" value="1"/>
</dbReference>
<dbReference type="PANTHER" id="PTHR45753">
    <property type="entry name" value="ORNITHINE CARBAMOYLTRANSFERASE, MITOCHONDRIAL"/>
    <property type="match status" value="1"/>
</dbReference>
<dbReference type="Pfam" id="PF00185">
    <property type="entry name" value="OTCace"/>
    <property type="match status" value="1"/>
</dbReference>
<dbReference type="Pfam" id="PF02729">
    <property type="entry name" value="OTCace_N"/>
    <property type="match status" value="1"/>
</dbReference>
<dbReference type="PRINTS" id="PR00100">
    <property type="entry name" value="AOTCASE"/>
</dbReference>
<dbReference type="PRINTS" id="PR00101">
    <property type="entry name" value="ATCASE"/>
</dbReference>
<dbReference type="SUPFAM" id="SSF53671">
    <property type="entry name" value="Aspartate/ornithine carbamoyltransferase"/>
    <property type="match status" value="1"/>
</dbReference>
<dbReference type="PROSITE" id="PS00097">
    <property type="entry name" value="CARBAMOYLTRANSFERASE"/>
    <property type="match status" value="1"/>
</dbReference>
<evidence type="ECO:0000255" key="1">
    <source>
        <dbReference type="HAMAP-Rule" id="MF_00001"/>
    </source>
</evidence>
<gene>
    <name evidence="1" type="primary">pyrB</name>
    <name type="ordered locus">cu0966</name>
</gene>
<organism>
    <name type="scientific">Corynebacterium urealyticum (strain ATCC 43042 / DSM 7109)</name>
    <dbReference type="NCBI Taxonomy" id="504474"/>
    <lineage>
        <taxon>Bacteria</taxon>
        <taxon>Bacillati</taxon>
        <taxon>Actinomycetota</taxon>
        <taxon>Actinomycetes</taxon>
        <taxon>Mycobacteriales</taxon>
        <taxon>Corynebacteriaceae</taxon>
        <taxon>Corynebacterium</taxon>
    </lineage>
</organism>
<proteinExistence type="inferred from homology"/>
<protein>
    <recommendedName>
        <fullName evidence="1">Aspartate carbamoyltransferase catalytic subunit</fullName>
        <ecNumber evidence="1">2.1.3.2</ecNumber>
    </recommendedName>
    <alternativeName>
        <fullName evidence="1">Aspartate transcarbamylase</fullName>
        <shortName evidence="1">ATCase</shortName>
    </alternativeName>
</protein>
<name>PYRB_CORU7</name>